<proteinExistence type="inferred from homology"/>
<sequence length="337" mass="35762">MKRIAVLTSGGDAPGMNAAIRAVVRKAISEGMEVYGINRGYAGMVDGDIFPLGSKEVGDKISRGGTFLYSARYPEFAQLEGQLAGIEQLKKHGIEGVVVIGGDGSYHGAMRLTEHGFPAVGIPGTIDNDIAGTDYTIGFDTAVNTAVEAIDKLRDTSSSHGRTFVVEVMGRNAGDIALWAGIASGADQIIVPEEEFDIEKVASTIQYDFEHKGKNHHIIVLAEGVMSGEAFAQKLKEAGDKSDLRVTNLGHILRGGSPTARDRVIASWMGSHAVELLKEGKGGLAVGIHNEELVESPILGTAEEGALFSLTEEGQIIVNNPHKARLDFAALNRSLSQ</sequence>
<name>PFKA_STRP3</name>
<reference key="1">
    <citation type="journal article" date="2002" name="Proc. Natl. Acad. Sci. U.S.A.">
        <title>Genome sequence of a serotype M3 strain of group A Streptococcus: phage-encoded toxins, the high-virulence phenotype, and clone emergence.</title>
        <authorList>
            <person name="Beres S.B."/>
            <person name="Sylva G.L."/>
            <person name="Barbian K.D."/>
            <person name="Lei B."/>
            <person name="Hoff J.S."/>
            <person name="Mammarella N.D."/>
            <person name="Liu M.-Y."/>
            <person name="Smoot J.C."/>
            <person name="Porcella S.F."/>
            <person name="Parkins L.D."/>
            <person name="Campbell D.S."/>
            <person name="Smith T.M."/>
            <person name="McCormick J.K."/>
            <person name="Leung D.Y.M."/>
            <person name="Schlievert P.M."/>
            <person name="Musser J.M."/>
        </authorList>
    </citation>
    <scope>NUCLEOTIDE SEQUENCE [LARGE SCALE GENOMIC DNA]</scope>
    <source>
        <strain>ATCC BAA-595 / MGAS315</strain>
    </source>
</reference>
<protein>
    <recommendedName>
        <fullName evidence="1">ATP-dependent 6-phosphofructokinase</fullName>
        <shortName evidence="1">ATP-PFK</shortName>
        <shortName evidence="1">Phosphofructokinase</shortName>
        <ecNumber evidence="1">2.7.1.11</ecNumber>
    </recommendedName>
    <alternativeName>
        <fullName evidence="1">Phosphohexokinase</fullName>
    </alternativeName>
</protein>
<feature type="chain" id="PRO_0000111993" description="ATP-dependent 6-phosphofructokinase">
    <location>
        <begin position="1"/>
        <end position="337"/>
    </location>
</feature>
<feature type="active site" description="Proton acceptor" evidence="1">
    <location>
        <position position="127"/>
    </location>
</feature>
<feature type="binding site" evidence="1">
    <location>
        <position position="11"/>
    </location>
    <ligand>
        <name>ATP</name>
        <dbReference type="ChEBI" id="CHEBI:30616"/>
    </ligand>
</feature>
<feature type="binding site" evidence="1">
    <location>
        <begin position="21"/>
        <end position="25"/>
    </location>
    <ligand>
        <name>ADP</name>
        <dbReference type="ChEBI" id="CHEBI:456216"/>
        <note>allosteric activator; ligand shared between dimeric partners</note>
    </ligand>
</feature>
<feature type="binding site" evidence="1">
    <location>
        <begin position="72"/>
        <end position="73"/>
    </location>
    <ligand>
        <name>ATP</name>
        <dbReference type="ChEBI" id="CHEBI:30616"/>
    </ligand>
</feature>
<feature type="binding site" evidence="1">
    <location>
        <begin position="102"/>
        <end position="105"/>
    </location>
    <ligand>
        <name>ATP</name>
        <dbReference type="ChEBI" id="CHEBI:30616"/>
    </ligand>
</feature>
<feature type="binding site" evidence="1">
    <location>
        <position position="103"/>
    </location>
    <ligand>
        <name>Mg(2+)</name>
        <dbReference type="ChEBI" id="CHEBI:18420"/>
        <note>catalytic</note>
    </ligand>
</feature>
<feature type="binding site" description="in other chain" evidence="1">
    <location>
        <begin position="125"/>
        <end position="127"/>
    </location>
    <ligand>
        <name>substrate</name>
        <note>ligand shared between dimeric partners</note>
    </ligand>
</feature>
<feature type="binding site" description="in other chain" evidence="1">
    <location>
        <position position="154"/>
    </location>
    <ligand>
        <name>ADP</name>
        <dbReference type="ChEBI" id="CHEBI:456216"/>
        <note>allosteric activator; ligand shared between dimeric partners</note>
    </ligand>
</feature>
<feature type="binding site" evidence="1">
    <location>
        <position position="162"/>
    </location>
    <ligand>
        <name>substrate</name>
        <note>ligand shared between dimeric partners</note>
    </ligand>
</feature>
<feature type="binding site" description="in other chain" evidence="1">
    <location>
        <begin position="169"/>
        <end position="171"/>
    </location>
    <ligand>
        <name>substrate</name>
        <note>ligand shared between dimeric partners</note>
    </ligand>
</feature>
<feature type="binding site" description="in other chain" evidence="1">
    <location>
        <begin position="185"/>
        <end position="187"/>
    </location>
    <ligand>
        <name>ADP</name>
        <dbReference type="ChEBI" id="CHEBI:456216"/>
        <note>allosteric activator; ligand shared between dimeric partners</note>
    </ligand>
</feature>
<feature type="binding site" description="in other chain" evidence="1">
    <location>
        <position position="212"/>
    </location>
    <ligand>
        <name>ADP</name>
        <dbReference type="ChEBI" id="CHEBI:456216"/>
        <note>allosteric activator; ligand shared between dimeric partners</note>
    </ligand>
</feature>
<feature type="binding site" description="in other chain" evidence="1">
    <location>
        <begin position="214"/>
        <end position="216"/>
    </location>
    <ligand>
        <name>ADP</name>
        <dbReference type="ChEBI" id="CHEBI:456216"/>
        <note>allosteric activator; ligand shared between dimeric partners</note>
    </ligand>
</feature>
<feature type="binding site" description="in other chain" evidence="1">
    <location>
        <position position="223"/>
    </location>
    <ligand>
        <name>substrate</name>
        <note>ligand shared between dimeric partners</note>
    </ligand>
</feature>
<feature type="binding site" evidence="1">
    <location>
        <position position="245"/>
    </location>
    <ligand>
        <name>substrate</name>
        <note>ligand shared between dimeric partners</note>
    </ligand>
</feature>
<feature type="binding site" description="in other chain" evidence="1">
    <location>
        <begin position="251"/>
        <end position="254"/>
    </location>
    <ligand>
        <name>substrate</name>
        <note>ligand shared between dimeric partners</note>
    </ligand>
</feature>
<organism>
    <name type="scientific">Streptococcus pyogenes serotype M3 (strain ATCC BAA-595 / MGAS315)</name>
    <dbReference type="NCBI Taxonomy" id="198466"/>
    <lineage>
        <taxon>Bacteria</taxon>
        <taxon>Bacillati</taxon>
        <taxon>Bacillota</taxon>
        <taxon>Bacilli</taxon>
        <taxon>Lactobacillales</taxon>
        <taxon>Streptococcaceae</taxon>
        <taxon>Streptococcus</taxon>
    </lineage>
</organism>
<dbReference type="EC" id="2.7.1.11" evidence="1"/>
<dbReference type="EMBL" id="AE014074">
    <property type="protein sequence ID" value="AAM79520.1"/>
    <property type="molecule type" value="Genomic_DNA"/>
</dbReference>
<dbReference type="RefSeq" id="WP_011054544.1">
    <property type="nucleotide sequence ID" value="NC_004070.1"/>
</dbReference>
<dbReference type="SMR" id="P0DD02"/>
<dbReference type="KEGG" id="spg:SpyM3_0913"/>
<dbReference type="HOGENOM" id="CLU_020655_0_1_9"/>
<dbReference type="UniPathway" id="UPA00109">
    <property type="reaction ID" value="UER00182"/>
</dbReference>
<dbReference type="Proteomes" id="UP000000564">
    <property type="component" value="Chromosome"/>
</dbReference>
<dbReference type="GO" id="GO:0005945">
    <property type="term" value="C:6-phosphofructokinase complex"/>
    <property type="evidence" value="ECO:0007669"/>
    <property type="project" value="TreeGrafter"/>
</dbReference>
<dbReference type="GO" id="GO:0003872">
    <property type="term" value="F:6-phosphofructokinase activity"/>
    <property type="evidence" value="ECO:0007669"/>
    <property type="project" value="UniProtKB-UniRule"/>
</dbReference>
<dbReference type="GO" id="GO:0016208">
    <property type="term" value="F:AMP binding"/>
    <property type="evidence" value="ECO:0007669"/>
    <property type="project" value="TreeGrafter"/>
</dbReference>
<dbReference type="GO" id="GO:0005524">
    <property type="term" value="F:ATP binding"/>
    <property type="evidence" value="ECO:0007669"/>
    <property type="project" value="UniProtKB-KW"/>
</dbReference>
<dbReference type="GO" id="GO:0070095">
    <property type="term" value="F:fructose-6-phosphate binding"/>
    <property type="evidence" value="ECO:0007669"/>
    <property type="project" value="TreeGrafter"/>
</dbReference>
<dbReference type="GO" id="GO:0042802">
    <property type="term" value="F:identical protein binding"/>
    <property type="evidence" value="ECO:0007669"/>
    <property type="project" value="TreeGrafter"/>
</dbReference>
<dbReference type="GO" id="GO:0046872">
    <property type="term" value="F:metal ion binding"/>
    <property type="evidence" value="ECO:0007669"/>
    <property type="project" value="UniProtKB-KW"/>
</dbReference>
<dbReference type="GO" id="GO:0048029">
    <property type="term" value="F:monosaccharide binding"/>
    <property type="evidence" value="ECO:0007669"/>
    <property type="project" value="TreeGrafter"/>
</dbReference>
<dbReference type="GO" id="GO:0061621">
    <property type="term" value="P:canonical glycolysis"/>
    <property type="evidence" value="ECO:0007669"/>
    <property type="project" value="TreeGrafter"/>
</dbReference>
<dbReference type="GO" id="GO:0030388">
    <property type="term" value="P:fructose 1,6-bisphosphate metabolic process"/>
    <property type="evidence" value="ECO:0007669"/>
    <property type="project" value="TreeGrafter"/>
</dbReference>
<dbReference type="GO" id="GO:0006002">
    <property type="term" value="P:fructose 6-phosphate metabolic process"/>
    <property type="evidence" value="ECO:0007669"/>
    <property type="project" value="InterPro"/>
</dbReference>
<dbReference type="FunFam" id="3.40.50.450:FF:000001">
    <property type="entry name" value="ATP-dependent 6-phosphofructokinase"/>
    <property type="match status" value="1"/>
</dbReference>
<dbReference type="FunFam" id="3.40.50.460:FF:000002">
    <property type="entry name" value="ATP-dependent 6-phosphofructokinase"/>
    <property type="match status" value="1"/>
</dbReference>
<dbReference type="Gene3D" id="3.40.50.450">
    <property type="match status" value="1"/>
</dbReference>
<dbReference type="Gene3D" id="3.40.50.460">
    <property type="entry name" value="Phosphofructokinase domain"/>
    <property type="match status" value="1"/>
</dbReference>
<dbReference type="HAMAP" id="MF_00339">
    <property type="entry name" value="Phosphofructokinase_I_B1"/>
    <property type="match status" value="1"/>
</dbReference>
<dbReference type="InterPro" id="IPR022953">
    <property type="entry name" value="ATP_PFK"/>
</dbReference>
<dbReference type="InterPro" id="IPR012003">
    <property type="entry name" value="ATP_PFK_prok-type"/>
</dbReference>
<dbReference type="InterPro" id="IPR012828">
    <property type="entry name" value="PFKA_ATP_prok"/>
</dbReference>
<dbReference type="InterPro" id="IPR015912">
    <property type="entry name" value="Phosphofructokinase_CS"/>
</dbReference>
<dbReference type="InterPro" id="IPR000023">
    <property type="entry name" value="Phosphofructokinase_dom"/>
</dbReference>
<dbReference type="InterPro" id="IPR035966">
    <property type="entry name" value="PKF_sf"/>
</dbReference>
<dbReference type="NCBIfam" id="TIGR02482">
    <property type="entry name" value="PFKA_ATP"/>
    <property type="match status" value="1"/>
</dbReference>
<dbReference type="NCBIfam" id="NF002872">
    <property type="entry name" value="PRK03202.1"/>
    <property type="match status" value="1"/>
</dbReference>
<dbReference type="PANTHER" id="PTHR13697:SF4">
    <property type="entry name" value="ATP-DEPENDENT 6-PHOSPHOFRUCTOKINASE"/>
    <property type="match status" value="1"/>
</dbReference>
<dbReference type="PANTHER" id="PTHR13697">
    <property type="entry name" value="PHOSPHOFRUCTOKINASE"/>
    <property type="match status" value="1"/>
</dbReference>
<dbReference type="Pfam" id="PF00365">
    <property type="entry name" value="PFK"/>
    <property type="match status" value="1"/>
</dbReference>
<dbReference type="PIRSF" id="PIRSF000532">
    <property type="entry name" value="ATP_PFK_prok"/>
    <property type="match status" value="1"/>
</dbReference>
<dbReference type="PRINTS" id="PR00476">
    <property type="entry name" value="PHFRCTKINASE"/>
</dbReference>
<dbReference type="SUPFAM" id="SSF53784">
    <property type="entry name" value="Phosphofructokinase"/>
    <property type="match status" value="1"/>
</dbReference>
<dbReference type="PROSITE" id="PS00433">
    <property type="entry name" value="PHOSPHOFRUCTOKINASE"/>
    <property type="match status" value="1"/>
</dbReference>
<comment type="function">
    <text evidence="1">Catalyzes the phosphorylation of D-fructose 6-phosphate to fructose 1,6-bisphosphate by ATP, the first committing step of glycolysis.</text>
</comment>
<comment type="catalytic activity">
    <reaction evidence="1">
        <text>beta-D-fructose 6-phosphate + ATP = beta-D-fructose 1,6-bisphosphate + ADP + H(+)</text>
        <dbReference type="Rhea" id="RHEA:16109"/>
        <dbReference type="ChEBI" id="CHEBI:15378"/>
        <dbReference type="ChEBI" id="CHEBI:30616"/>
        <dbReference type="ChEBI" id="CHEBI:32966"/>
        <dbReference type="ChEBI" id="CHEBI:57634"/>
        <dbReference type="ChEBI" id="CHEBI:456216"/>
        <dbReference type="EC" id="2.7.1.11"/>
    </reaction>
</comment>
<comment type="cofactor">
    <cofactor evidence="1">
        <name>Mg(2+)</name>
        <dbReference type="ChEBI" id="CHEBI:18420"/>
    </cofactor>
</comment>
<comment type="activity regulation">
    <text evidence="1">Allosterically activated by ADP and other diphosphonucleosides, and allosterically inhibited by phosphoenolpyruvate.</text>
</comment>
<comment type="pathway">
    <text evidence="1">Carbohydrate degradation; glycolysis; D-glyceraldehyde 3-phosphate and glycerone phosphate from D-glucose: step 3/4.</text>
</comment>
<comment type="subunit">
    <text evidence="1">Homotetramer.</text>
</comment>
<comment type="subcellular location">
    <subcellularLocation>
        <location evidence="1">Cytoplasm</location>
    </subcellularLocation>
</comment>
<comment type="similarity">
    <text evidence="1">Belongs to the phosphofructokinase type A (PFKA) family. ATP-dependent PFK group I subfamily. Prokaryotic clade 'B1' sub-subfamily.</text>
</comment>
<keyword id="KW-0021">Allosteric enzyme</keyword>
<keyword id="KW-0067">ATP-binding</keyword>
<keyword id="KW-0963">Cytoplasm</keyword>
<keyword id="KW-0324">Glycolysis</keyword>
<keyword id="KW-0418">Kinase</keyword>
<keyword id="KW-0460">Magnesium</keyword>
<keyword id="KW-0479">Metal-binding</keyword>
<keyword id="KW-0547">Nucleotide-binding</keyword>
<keyword id="KW-0808">Transferase</keyword>
<accession>P0DD02</accession>
<accession>Q8K7A2</accession>
<evidence type="ECO:0000255" key="1">
    <source>
        <dbReference type="HAMAP-Rule" id="MF_00339"/>
    </source>
</evidence>
<gene>
    <name evidence="1" type="primary">pfkA</name>
    <name type="synonym">pfk</name>
    <name type="ordered locus">SpyM3_0913</name>
</gene>